<accession>A9KJI8</accession>
<keyword id="KW-1185">Reference proteome</keyword>
<keyword id="KW-0687">Ribonucleoprotein</keyword>
<keyword id="KW-0689">Ribosomal protein</keyword>
<keyword id="KW-0694">RNA-binding</keyword>
<keyword id="KW-0699">rRNA-binding</keyword>
<proteinExistence type="inferred from homology"/>
<sequence length="219" mass="24255">MGQKVNPHGLRVGVINDWDSRWYAEADFADNLVEDYNIRTYLKKKLYSAGVAKIEIERASDKLKVIIHTAKPGVVIGKGGAEIEKLKVEITQYTTKKLNLEIKEIKKPDVCAQLVAESIAAQLENRISFRRAMKSTMSRTMRSGAKGIKTAVSGRLGGADMARTEFYSEGTIPLQTLRADIDYGFAEADTTFGKLGVKAWIYHGEVLPTKGNKKEGSDK</sequence>
<protein>
    <recommendedName>
        <fullName evidence="1">Small ribosomal subunit protein uS3</fullName>
    </recommendedName>
    <alternativeName>
        <fullName evidence="2">30S ribosomal protein S3</fullName>
    </alternativeName>
</protein>
<name>RS3_LACP7</name>
<organism>
    <name type="scientific">Lachnoclostridium phytofermentans (strain ATCC 700394 / DSM 18823 / ISDg)</name>
    <name type="common">Clostridium phytofermentans</name>
    <dbReference type="NCBI Taxonomy" id="357809"/>
    <lineage>
        <taxon>Bacteria</taxon>
        <taxon>Bacillati</taxon>
        <taxon>Bacillota</taxon>
        <taxon>Clostridia</taxon>
        <taxon>Lachnospirales</taxon>
        <taxon>Lachnospiraceae</taxon>
    </lineage>
</organism>
<feature type="chain" id="PRO_1000086110" description="Small ribosomal subunit protein uS3">
    <location>
        <begin position="1"/>
        <end position="219"/>
    </location>
</feature>
<feature type="domain" description="KH type-2" evidence="1">
    <location>
        <begin position="38"/>
        <end position="106"/>
    </location>
</feature>
<comment type="function">
    <text evidence="1">Binds the lower part of the 30S subunit head. Binds mRNA in the 70S ribosome, positioning it for translation.</text>
</comment>
<comment type="subunit">
    <text evidence="1">Part of the 30S ribosomal subunit. Forms a tight complex with proteins S10 and S14.</text>
</comment>
<comment type="similarity">
    <text evidence="1">Belongs to the universal ribosomal protein uS3 family.</text>
</comment>
<evidence type="ECO:0000255" key="1">
    <source>
        <dbReference type="HAMAP-Rule" id="MF_01309"/>
    </source>
</evidence>
<evidence type="ECO:0000305" key="2"/>
<reference key="1">
    <citation type="submission" date="2007-11" db="EMBL/GenBank/DDBJ databases">
        <title>Complete genome sequence of Clostridium phytofermentans ISDg.</title>
        <authorList>
            <person name="Leschine S.B."/>
            <person name="Warnick T.A."/>
            <person name="Blanchard J.L."/>
            <person name="Schnell D.J."/>
            <person name="Petit E.L."/>
            <person name="LaTouf W.G."/>
            <person name="Copeland A."/>
            <person name="Lucas S."/>
            <person name="Lapidus A."/>
            <person name="Barry K."/>
            <person name="Glavina del Rio T."/>
            <person name="Dalin E."/>
            <person name="Tice H."/>
            <person name="Pitluck S."/>
            <person name="Kiss H."/>
            <person name="Brettin T."/>
            <person name="Bruce D."/>
            <person name="Detter J.C."/>
            <person name="Han C."/>
            <person name="Kuske C."/>
            <person name="Schmutz J."/>
            <person name="Larimer F."/>
            <person name="Land M."/>
            <person name="Hauser L."/>
            <person name="Kyrpides N."/>
            <person name="Kim E.A."/>
            <person name="Richardson P."/>
        </authorList>
    </citation>
    <scope>NUCLEOTIDE SEQUENCE [LARGE SCALE GENOMIC DNA]</scope>
    <source>
        <strain>ATCC 700394 / DSM 18823 / ISDg</strain>
    </source>
</reference>
<gene>
    <name evidence="1" type="primary">rpsC</name>
    <name type="ordered locus">Cphy_3661</name>
</gene>
<dbReference type="EMBL" id="CP000885">
    <property type="protein sequence ID" value="ABX44008.1"/>
    <property type="molecule type" value="Genomic_DNA"/>
</dbReference>
<dbReference type="RefSeq" id="WP_012201656.1">
    <property type="nucleotide sequence ID" value="NC_010001.1"/>
</dbReference>
<dbReference type="SMR" id="A9KJI8"/>
<dbReference type="STRING" id="357809.Cphy_3661"/>
<dbReference type="KEGG" id="cpy:Cphy_3661"/>
<dbReference type="eggNOG" id="COG0092">
    <property type="taxonomic scope" value="Bacteria"/>
</dbReference>
<dbReference type="HOGENOM" id="CLU_058591_0_2_9"/>
<dbReference type="OrthoDB" id="9806396at2"/>
<dbReference type="Proteomes" id="UP000000370">
    <property type="component" value="Chromosome"/>
</dbReference>
<dbReference type="GO" id="GO:0022627">
    <property type="term" value="C:cytosolic small ribosomal subunit"/>
    <property type="evidence" value="ECO:0007669"/>
    <property type="project" value="TreeGrafter"/>
</dbReference>
<dbReference type="GO" id="GO:0003729">
    <property type="term" value="F:mRNA binding"/>
    <property type="evidence" value="ECO:0007669"/>
    <property type="project" value="UniProtKB-UniRule"/>
</dbReference>
<dbReference type="GO" id="GO:0019843">
    <property type="term" value="F:rRNA binding"/>
    <property type="evidence" value="ECO:0007669"/>
    <property type="project" value="UniProtKB-UniRule"/>
</dbReference>
<dbReference type="GO" id="GO:0003735">
    <property type="term" value="F:structural constituent of ribosome"/>
    <property type="evidence" value="ECO:0007669"/>
    <property type="project" value="InterPro"/>
</dbReference>
<dbReference type="GO" id="GO:0006412">
    <property type="term" value="P:translation"/>
    <property type="evidence" value="ECO:0007669"/>
    <property type="project" value="UniProtKB-UniRule"/>
</dbReference>
<dbReference type="CDD" id="cd02412">
    <property type="entry name" value="KH-II_30S_S3"/>
    <property type="match status" value="1"/>
</dbReference>
<dbReference type="FunFam" id="3.30.1140.32:FF:000002">
    <property type="entry name" value="30S ribosomal protein S3"/>
    <property type="match status" value="1"/>
</dbReference>
<dbReference type="FunFam" id="3.30.300.20:FF:000001">
    <property type="entry name" value="30S ribosomal protein S3"/>
    <property type="match status" value="1"/>
</dbReference>
<dbReference type="Gene3D" id="3.30.300.20">
    <property type="match status" value="1"/>
</dbReference>
<dbReference type="Gene3D" id="3.30.1140.32">
    <property type="entry name" value="Ribosomal protein S3, C-terminal domain"/>
    <property type="match status" value="1"/>
</dbReference>
<dbReference type="HAMAP" id="MF_01309_B">
    <property type="entry name" value="Ribosomal_uS3_B"/>
    <property type="match status" value="1"/>
</dbReference>
<dbReference type="InterPro" id="IPR004087">
    <property type="entry name" value="KH_dom"/>
</dbReference>
<dbReference type="InterPro" id="IPR015946">
    <property type="entry name" value="KH_dom-like_a/b"/>
</dbReference>
<dbReference type="InterPro" id="IPR004044">
    <property type="entry name" value="KH_dom_type_2"/>
</dbReference>
<dbReference type="InterPro" id="IPR009019">
    <property type="entry name" value="KH_sf_prok-type"/>
</dbReference>
<dbReference type="InterPro" id="IPR036419">
    <property type="entry name" value="Ribosomal_S3_C_sf"/>
</dbReference>
<dbReference type="InterPro" id="IPR005704">
    <property type="entry name" value="Ribosomal_uS3_bac-typ"/>
</dbReference>
<dbReference type="InterPro" id="IPR001351">
    <property type="entry name" value="Ribosomal_uS3_C"/>
</dbReference>
<dbReference type="InterPro" id="IPR018280">
    <property type="entry name" value="Ribosomal_uS3_CS"/>
</dbReference>
<dbReference type="NCBIfam" id="TIGR01009">
    <property type="entry name" value="rpsC_bact"/>
    <property type="match status" value="1"/>
</dbReference>
<dbReference type="PANTHER" id="PTHR11760">
    <property type="entry name" value="30S/40S RIBOSOMAL PROTEIN S3"/>
    <property type="match status" value="1"/>
</dbReference>
<dbReference type="PANTHER" id="PTHR11760:SF19">
    <property type="entry name" value="SMALL RIBOSOMAL SUBUNIT PROTEIN US3C"/>
    <property type="match status" value="1"/>
</dbReference>
<dbReference type="Pfam" id="PF07650">
    <property type="entry name" value="KH_2"/>
    <property type="match status" value="1"/>
</dbReference>
<dbReference type="Pfam" id="PF00189">
    <property type="entry name" value="Ribosomal_S3_C"/>
    <property type="match status" value="1"/>
</dbReference>
<dbReference type="SMART" id="SM00322">
    <property type="entry name" value="KH"/>
    <property type="match status" value="1"/>
</dbReference>
<dbReference type="SUPFAM" id="SSF54814">
    <property type="entry name" value="Prokaryotic type KH domain (KH-domain type II)"/>
    <property type="match status" value="1"/>
</dbReference>
<dbReference type="SUPFAM" id="SSF54821">
    <property type="entry name" value="Ribosomal protein S3 C-terminal domain"/>
    <property type="match status" value="1"/>
</dbReference>
<dbReference type="PROSITE" id="PS50823">
    <property type="entry name" value="KH_TYPE_2"/>
    <property type="match status" value="1"/>
</dbReference>
<dbReference type="PROSITE" id="PS00548">
    <property type="entry name" value="RIBOSOMAL_S3"/>
    <property type="match status" value="1"/>
</dbReference>